<gene>
    <name type="primary">yisL</name>
    <name type="ordered locus">BSU10760</name>
</gene>
<proteinExistence type="inferred from homology"/>
<dbReference type="EMBL" id="Y09476">
    <property type="protein sequence ID" value="CAA70640.1"/>
    <property type="molecule type" value="Genomic_DNA"/>
</dbReference>
<dbReference type="EMBL" id="AL009126">
    <property type="protein sequence ID" value="CAB12916.1"/>
    <property type="molecule type" value="Genomic_DNA"/>
</dbReference>
<dbReference type="PIR" id="D69837">
    <property type="entry name" value="D69837"/>
</dbReference>
<dbReference type="RefSeq" id="NP_388957.1">
    <property type="nucleotide sequence ID" value="NC_000964.3"/>
</dbReference>
<dbReference type="RefSeq" id="WP_003244937.1">
    <property type="nucleotide sequence ID" value="NZ_OZ025638.1"/>
</dbReference>
<dbReference type="SMR" id="O06725"/>
<dbReference type="FunCoup" id="O06725">
    <property type="interactions" value="212"/>
</dbReference>
<dbReference type="STRING" id="224308.BSU10760"/>
<dbReference type="PaxDb" id="224308-BSU10760"/>
<dbReference type="EnsemblBacteria" id="CAB12916">
    <property type="protein sequence ID" value="CAB12916"/>
    <property type="gene ID" value="BSU_10760"/>
</dbReference>
<dbReference type="GeneID" id="939333"/>
<dbReference type="KEGG" id="bsu:BSU10760"/>
<dbReference type="PATRIC" id="fig|224308.179.peg.1157"/>
<dbReference type="eggNOG" id="ENOG5032W2Q">
    <property type="taxonomic scope" value="Bacteria"/>
</dbReference>
<dbReference type="InParanoid" id="O06725"/>
<dbReference type="OrthoDB" id="2365314at2"/>
<dbReference type="PhylomeDB" id="O06725"/>
<dbReference type="BioCyc" id="BSUB:BSU10760-MONOMER"/>
<dbReference type="Proteomes" id="UP000001570">
    <property type="component" value="Chromosome"/>
</dbReference>
<dbReference type="GO" id="GO:0005886">
    <property type="term" value="C:plasma membrane"/>
    <property type="evidence" value="ECO:0007669"/>
    <property type="project" value="UniProtKB-SubCell"/>
</dbReference>
<dbReference type="HAMAP" id="MF_01536">
    <property type="entry name" value="UPF0344"/>
    <property type="match status" value="1"/>
</dbReference>
<dbReference type="InterPro" id="IPR010899">
    <property type="entry name" value="UPF0344"/>
</dbReference>
<dbReference type="NCBIfam" id="NF010198">
    <property type="entry name" value="PRK13673.1-5"/>
    <property type="match status" value="1"/>
</dbReference>
<dbReference type="Pfam" id="PF07457">
    <property type="entry name" value="DUF1516"/>
    <property type="match status" value="1"/>
</dbReference>
<evidence type="ECO:0000255" key="1"/>
<evidence type="ECO:0000305" key="2"/>
<accession>O06725</accession>
<accession>Q796R0</accession>
<sequence length="118" mass="13222">MTHLHITTWVVALILLFVSYSLYSSGSAKGAKITHMILRLFYILIILTGAELFVRFANWNGEYAGKMILGIITIGLMEMLLIRKKKEKSTGGLWVGFVIVLLLTVLLGLHLPIGFQLF</sequence>
<comment type="subcellular location">
    <subcellularLocation>
        <location evidence="2">Cell membrane</location>
        <topology evidence="2">Multi-pass membrane protein</topology>
    </subcellularLocation>
</comment>
<comment type="similarity">
    <text evidence="2">Belongs to the UPF0344 family.</text>
</comment>
<keyword id="KW-1003">Cell membrane</keyword>
<keyword id="KW-0472">Membrane</keyword>
<keyword id="KW-1185">Reference proteome</keyword>
<keyword id="KW-0812">Transmembrane</keyword>
<keyword id="KW-1133">Transmembrane helix</keyword>
<reference key="1">
    <citation type="journal article" date="1997" name="Microbiology">
        <title>Sequencing of regions downstream of addA (98 degrees) and citG (289 degrees) in Bacillus subtilis.</title>
        <authorList>
            <person name="Medina N."/>
            <person name="Vannier F."/>
            <person name="Roche B."/>
            <person name="Autret S."/>
            <person name="Levine A."/>
            <person name="Seror S.J."/>
        </authorList>
    </citation>
    <scope>NUCLEOTIDE SEQUENCE [GENOMIC DNA]</scope>
    <source>
        <strain>168</strain>
    </source>
</reference>
<reference key="2">
    <citation type="journal article" date="1997" name="Nature">
        <title>The complete genome sequence of the Gram-positive bacterium Bacillus subtilis.</title>
        <authorList>
            <person name="Kunst F."/>
            <person name="Ogasawara N."/>
            <person name="Moszer I."/>
            <person name="Albertini A.M."/>
            <person name="Alloni G."/>
            <person name="Azevedo V."/>
            <person name="Bertero M.G."/>
            <person name="Bessieres P."/>
            <person name="Bolotin A."/>
            <person name="Borchert S."/>
            <person name="Borriss R."/>
            <person name="Boursier L."/>
            <person name="Brans A."/>
            <person name="Braun M."/>
            <person name="Brignell S.C."/>
            <person name="Bron S."/>
            <person name="Brouillet S."/>
            <person name="Bruschi C.V."/>
            <person name="Caldwell B."/>
            <person name="Capuano V."/>
            <person name="Carter N.M."/>
            <person name="Choi S.-K."/>
            <person name="Codani J.-J."/>
            <person name="Connerton I.F."/>
            <person name="Cummings N.J."/>
            <person name="Daniel R.A."/>
            <person name="Denizot F."/>
            <person name="Devine K.M."/>
            <person name="Duesterhoeft A."/>
            <person name="Ehrlich S.D."/>
            <person name="Emmerson P.T."/>
            <person name="Entian K.-D."/>
            <person name="Errington J."/>
            <person name="Fabret C."/>
            <person name="Ferrari E."/>
            <person name="Foulger D."/>
            <person name="Fritz C."/>
            <person name="Fujita M."/>
            <person name="Fujita Y."/>
            <person name="Fuma S."/>
            <person name="Galizzi A."/>
            <person name="Galleron N."/>
            <person name="Ghim S.-Y."/>
            <person name="Glaser P."/>
            <person name="Goffeau A."/>
            <person name="Golightly E.J."/>
            <person name="Grandi G."/>
            <person name="Guiseppi G."/>
            <person name="Guy B.J."/>
            <person name="Haga K."/>
            <person name="Haiech J."/>
            <person name="Harwood C.R."/>
            <person name="Henaut A."/>
            <person name="Hilbert H."/>
            <person name="Holsappel S."/>
            <person name="Hosono S."/>
            <person name="Hullo M.-F."/>
            <person name="Itaya M."/>
            <person name="Jones L.-M."/>
            <person name="Joris B."/>
            <person name="Karamata D."/>
            <person name="Kasahara Y."/>
            <person name="Klaerr-Blanchard M."/>
            <person name="Klein C."/>
            <person name="Kobayashi Y."/>
            <person name="Koetter P."/>
            <person name="Koningstein G."/>
            <person name="Krogh S."/>
            <person name="Kumano M."/>
            <person name="Kurita K."/>
            <person name="Lapidus A."/>
            <person name="Lardinois S."/>
            <person name="Lauber J."/>
            <person name="Lazarevic V."/>
            <person name="Lee S.-M."/>
            <person name="Levine A."/>
            <person name="Liu H."/>
            <person name="Masuda S."/>
            <person name="Mauel C."/>
            <person name="Medigue C."/>
            <person name="Medina N."/>
            <person name="Mellado R.P."/>
            <person name="Mizuno M."/>
            <person name="Moestl D."/>
            <person name="Nakai S."/>
            <person name="Noback M."/>
            <person name="Noone D."/>
            <person name="O'Reilly M."/>
            <person name="Ogawa K."/>
            <person name="Ogiwara A."/>
            <person name="Oudega B."/>
            <person name="Park S.-H."/>
            <person name="Parro V."/>
            <person name="Pohl T.M."/>
            <person name="Portetelle D."/>
            <person name="Porwollik S."/>
            <person name="Prescott A.M."/>
            <person name="Presecan E."/>
            <person name="Pujic P."/>
            <person name="Purnelle B."/>
            <person name="Rapoport G."/>
            <person name="Rey M."/>
            <person name="Reynolds S."/>
            <person name="Rieger M."/>
            <person name="Rivolta C."/>
            <person name="Rocha E."/>
            <person name="Roche B."/>
            <person name="Rose M."/>
            <person name="Sadaie Y."/>
            <person name="Sato T."/>
            <person name="Scanlan E."/>
            <person name="Schleich S."/>
            <person name="Schroeter R."/>
            <person name="Scoffone F."/>
            <person name="Sekiguchi J."/>
            <person name="Sekowska A."/>
            <person name="Seror S.J."/>
            <person name="Serror P."/>
            <person name="Shin B.-S."/>
            <person name="Soldo B."/>
            <person name="Sorokin A."/>
            <person name="Tacconi E."/>
            <person name="Takagi T."/>
            <person name="Takahashi H."/>
            <person name="Takemaru K."/>
            <person name="Takeuchi M."/>
            <person name="Tamakoshi A."/>
            <person name="Tanaka T."/>
            <person name="Terpstra P."/>
            <person name="Tognoni A."/>
            <person name="Tosato V."/>
            <person name="Uchiyama S."/>
            <person name="Vandenbol M."/>
            <person name="Vannier F."/>
            <person name="Vassarotti A."/>
            <person name="Viari A."/>
            <person name="Wambutt R."/>
            <person name="Wedler E."/>
            <person name="Wedler H."/>
            <person name="Weitzenegger T."/>
            <person name="Winters P."/>
            <person name="Wipat A."/>
            <person name="Yamamoto H."/>
            <person name="Yamane K."/>
            <person name="Yasumoto K."/>
            <person name="Yata K."/>
            <person name="Yoshida K."/>
            <person name="Yoshikawa H.-F."/>
            <person name="Zumstein E."/>
            <person name="Yoshikawa H."/>
            <person name="Danchin A."/>
        </authorList>
    </citation>
    <scope>NUCLEOTIDE SEQUENCE [LARGE SCALE GENOMIC DNA]</scope>
    <source>
        <strain>168</strain>
    </source>
</reference>
<name>YISL_BACSU</name>
<feature type="chain" id="PRO_0000105886" description="UPF0344 protein YisL">
    <location>
        <begin position="1"/>
        <end position="118"/>
    </location>
</feature>
<feature type="transmembrane region" description="Helical" evidence="1">
    <location>
        <begin position="4"/>
        <end position="24"/>
    </location>
</feature>
<feature type="transmembrane region" description="Helical" evidence="1">
    <location>
        <begin position="33"/>
        <end position="53"/>
    </location>
</feature>
<feature type="transmembrane region" description="Helical" evidence="1">
    <location>
        <begin position="62"/>
        <end position="82"/>
    </location>
</feature>
<feature type="transmembrane region" description="Helical" evidence="1">
    <location>
        <begin position="93"/>
        <end position="113"/>
    </location>
</feature>
<organism>
    <name type="scientific">Bacillus subtilis (strain 168)</name>
    <dbReference type="NCBI Taxonomy" id="224308"/>
    <lineage>
        <taxon>Bacteria</taxon>
        <taxon>Bacillati</taxon>
        <taxon>Bacillota</taxon>
        <taxon>Bacilli</taxon>
        <taxon>Bacillales</taxon>
        <taxon>Bacillaceae</taxon>
        <taxon>Bacillus</taxon>
    </lineage>
</organism>
<protein>
    <recommendedName>
        <fullName>UPF0344 protein YisL</fullName>
    </recommendedName>
</protein>